<proteinExistence type="inferred from homology"/>
<evidence type="ECO:0000255" key="1">
    <source>
        <dbReference type="HAMAP-Rule" id="MF_00054"/>
    </source>
</evidence>
<organism>
    <name type="scientific">Edwardsiella ictaluri (strain 93-146)</name>
    <dbReference type="NCBI Taxonomy" id="634503"/>
    <lineage>
        <taxon>Bacteria</taxon>
        <taxon>Pseudomonadati</taxon>
        <taxon>Pseudomonadota</taxon>
        <taxon>Gammaproteobacteria</taxon>
        <taxon>Enterobacterales</taxon>
        <taxon>Hafniaceae</taxon>
        <taxon>Edwardsiella</taxon>
    </lineage>
</organism>
<gene>
    <name evidence="1" type="primary">fusA</name>
    <name type="ordered locus">NT01EI_3597</name>
</gene>
<dbReference type="EMBL" id="CP001600">
    <property type="protein sequence ID" value="ACR70725.1"/>
    <property type="molecule type" value="Genomic_DNA"/>
</dbReference>
<dbReference type="RefSeq" id="WP_015872768.1">
    <property type="nucleotide sequence ID" value="NZ_CP169062.1"/>
</dbReference>
<dbReference type="SMR" id="C5BGM8"/>
<dbReference type="STRING" id="67780.B6E78_09585"/>
<dbReference type="GeneID" id="69540440"/>
<dbReference type="KEGG" id="eic:NT01EI_3597"/>
<dbReference type="PATRIC" id="fig|634503.3.peg.3204"/>
<dbReference type="HOGENOM" id="CLU_002794_4_1_6"/>
<dbReference type="OrthoDB" id="9804431at2"/>
<dbReference type="Proteomes" id="UP000001485">
    <property type="component" value="Chromosome"/>
</dbReference>
<dbReference type="GO" id="GO:0005737">
    <property type="term" value="C:cytoplasm"/>
    <property type="evidence" value="ECO:0007669"/>
    <property type="project" value="UniProtKB-SubCell"/>
</dbReference>
<dbReference type="GO" id="GO:0005525">
    <property type="term" value="F:GTP binding"/>
    <property type="evidence" value="ECO:0007669"/>
    <property type="project" value="UniProtKB-UniRule"/>
</dbReference>
<dbReference type="GO" id="GO:0003924">
    <property type="term" value="F:GTPase activity"/>
    <property type="evidence" value="ECO:0007669"/>
    <property type="project" value="InterPro"/>
</dbReference>
<dbReference type="GO" id="GO:0097216">
    <property type="term" value="F:guanosine tetraphosphate binding"/>
    <property type="evidence" value="ECO:0007669"/>
    <property type="project" value="UniProtKB-ARBA"/>
</dbReference>
<dbReference type="GO" id="GO:0003746">
    <property type="term" value="F:translation elongation factor activity"/>
    <property type="evidence" value="ECO:0007669"/>
    <property type="project" value="UniProtKB-UniRule"/>
</dbReference>
<dbReference type="GO" id="GO:0032790">
    <property type="term" value="P:ribosome disassembly"/>
    <property type="evidence" value="ECO:0007669"/>
    <property type="project" value="TreeGrafter"/>
</dbReference>
<dbReference type="CDD" id="cd01886">
    <property type="entry name" value="EF-G"/>
    <property type="match status" value="1"/>
</dbReference>
<dbReference type="CDD" id="cd16262">
    <property type="entry name" value="EFG_III"/>
    <property type="match status" value="1"/>
</dbReference>
<dbReference type="CDD" id="cd01434">
    <property type="entry name" value="EFG_mtEFG1_IV"/>
    <property type="match status" value="1"/>
</dbReference>
<dbReference type="CDD" id="cd03713">
    <property type="entry name" value="EFG_mtEFG_C"/>
    <property type="match status" value="1"/>
</dbReference>
<dbReference type="CDD" id="cd04088">
    <property type="entry name" value="EFG_mtEFG_II"/>
    <property type="match status" value="1"/>
</dbReference>
<dbReference type="FunFam" id="2.40.30.10:FF:000006">
    <property type="entry name" value="Elongation factor G"/>
    <property type="match status" value="1"/>
</dbReference>
<dbReference type="FunFam" id="3.30.230.10:FF:000003">
    <property type="entry name" value="Elongation factor G"/>
    <property type="match status" value="1"/>
</dbReference>
<dbReference type="FunFam" id="3.30.70.240:FF:000001">
    <property type="entry name" value="Elongation factor G"/>
    <property type="match status" value="1"/>
</dbReference>
<dbReference type="FunFam" id="3.30.70.870:FF:000001">
    <property type="entry name" value="Elongation factor G"/>
    <property type="match status" value="1"/>
</dbReference>
<dbReference type="FunFam" id="3.40.50.300:FF:000029">
    <property type="entry name" value="Elongation factor G"/>
    <property type="match status" value="1"/>
</dbReference>
<dbReference type="Gene3D" id="3.30.230.10">
    <property type="match status" value="1"/>
</dbReference>
<dbReference type="Gene3D" id="3.30.70.240">
    <property type="match status" value="1"/>
</dbReference>
<dbReference type="Gene3D" id="3.30.70.870">
    <property type="entry name" value="Elongation Factor G (Translational Gtpase), domain 3"/>
    <property type="match status" value="1"/>
</dbReference>
<dbReference type="Gene3D" id="3.40.50.300">
    <property type="entry name" value="P-loop containing nucleotide triphosphate hydrolases"/>
    <property type="match status" value="1"/>
</dbReference>
<dbReference type="Gene3D" id="2.40.30.10">
    <property type="entry name" value="Translation factors"/>
    <property type="match status" value="1"/>
</dbReference>
<dbReference type="HAMAP" id="MF_00054_B">
    <property type="entry name" value="EF_G_EF_2_B"/>
    <property type="match status" value="1"/>
</dbReference>
<dbReference type="InterPro" id="IPR041095">
    <property type="entry name" value="EFG_II"/>
</dbReference>
<dbReference type="InterPro" id="IPR009022">
    <property type="entry name" value="EFG_III"/>
</dbReference>
<dbReference type="InterPro" id="IPR035647">
    <property type="entry name" value="EFG_III/V"/>
</dbReference>
<dbReference type="InterPro" id="IPR047872">
    <property type="entry name" value="EFG_IV"/>
</dbReference>
<dbReference type="InterPro" id="IPR035649">
    <property type="entry name" value="EFG_V"/>
</dbReference>
<dbReference type="InterPro" id="IPR000640">
    <property type="entry name" value="EFG_V-like"/>
</dbReference>
<dbReference type="InterPro" id="IPR004161">
    <property type="entry name" value="EFTu-like_2"/>
</dbReference>
<dbReference type="InterPro" id="IPR031157">
    <property type="entry name" value="G_TR_CS"/>
</dbReference>
<dbReference type="InterPro" id="IPR027417">
    <property type="entry name" value="P-loop_NTPase"/>
</dbReference>
<dbReference type="InterPro" id="IPR020568">
    <property type="entry name" value="Ribosomal_Su5_D2-typ_SF"/>
</dbReference>
<dbReference type="InterPro" id="IPR014721">
    <property type="entry name" value="Ribsml_uS5_D2-typ_fold_subgr"/>
</dbReference>
<dbReference type="InterPro" id="IPR005225">
    <property type="entry name" value="Small_GTP-bd"/>
</dbReference>
<dbReference type="InterPro" id="IPR000795">
    <property type="entry name" value="T_Tr_GTP-bd_dom"/>
</dbReference>
<dbReference type="InterPro" id="IPR009000">
    <property type="entry name" value="Transl_B-barrel_sf"/>
</dbReference>
<dbReference type="InterPro" id="IPR004540">
    <property type="entry name" value="Transl_elong_EFG/EF2"/>
</dbReference>
<dbReference type="InterPro" id="IPR005517">
    <property type="entry name" value="Transl_elong_EFG/EF2_IV"/>
</dbReference>
<dbReference type="NCBIfam" id="TIGR00484">
    <property type="entry name" value="EF-G"/>
    <property type="match status" value="1"/>
</dbReference>
<dbReference type="NCBIfam" id="NF009381">
    <property type="entry name" value="PRK12740.1-5"/>
    <property type="match status" value="1"/>
</dbReference>
<dbReference type="NCBIfam" id="TIGR00231">
    <property type="entry name" value="small_GTP"/>
    <property type="match status" value="1"/>
</dbReference>
<dbReference type="PANTHER" id="PTHR43261:SF1">
    <property type="entry name" value="RIBOSOME-RELEASING FACTOR 2, MITOCHONDRIAL"/>
    <property type="match status" value="1"/>
</dbReference>
<dbReference type="PANTHER" id="PTHR43261">
    <property type="entry name" value="TRANSLATION ELONGATION FACTOR G-RELATED"/>
    <property type="match status" value="1"/>
</dbReference>
<dbReference type="Pfam" id="PF00679">
    <property type="entry name" value="EFG_C"/>
    <property type="match status" value="1"/>
</dbReference>
<dbReference type="Pfam" id="PF14492">
    <property type="entry name" value="EFG_III"/>
    <property type="match status" value="1"/>
</dbReference>
<dbReference type="Pfam" id="PF03764">
    <property type="entry name" value="EFG_IV"/>
    <property type="match status" value="1"/>
</dbReference>
<dbReference type="Pfam" id="PF00009">
    <property type="entry name" value="GTP_EFTU"/>
    <property type="match status" value="1"/>
</dbReference>
<dbReference type="Pfam" id="PF03144">
    <property type="entry name" value="GTP_EFTU_D2"/>
    <property type="match status" value="1"/>
</dbReference>
<dbReference type="PRINTS" id="PR00315">
    <property type="entry name" value="ELONGATNFCT"/>
</dbReference>
<dbReference type="SMART" id="SM00838">
    <property type="entry name" value="EFG_C"/>
    <property type="match status" value="1"/>
</dbReference>
<dbReference type="SMART" id="SM00889">
    <property type="entry name" value="EFG_IV"/>
    <property type="match status" value="1"/>
</dbReference>
<dbReference type="SUPFAM" id="SSF54980">
    <property type="entry name" value="EF-G C-terminal domain-like"/>
    <property type="match status" value="2"/>
</dbReference>
<dbReference type="SUPFAM" id="SSF52540">
    <property type="entry name" value="P-loop containing nucleoside triphosphate hydrolases"/>
    <property type="match status" value="1"/>
</dbReference>
<dbReference type="SUPFAM" id="SSF54211">
    <property type="entry name" value="Ribosomal protein S5 domain 2-like"/>
    <property type="match status" value="1"/>
</dbReference>
<dbReference type="SUPFAM" id="SSF50447">
    <property type="entry name" value="Translation proteins"/>
    <property type="match status" value="1"/>
</dbReference>
<dbReference type="PROSITE" id="PS00301">
    <property type="entry name" value="G_TR_1"/>
    <property type="match status" value="1"/>
</dbReference>
<dbReference type="PROSITE" id="PS51722">
    <property type="entry name" value="G_TR_2"/>
    <property type="match status" value="1"/>
</dbReference>
<sequence length="702" mass="77472">MARTTPISRYRNIGISAHIDAGKTTTTERILFYTGVNHKIGEVHDGAATMDWMEQEQERGITITSAATTAFWSGMAKQFEPHRINIIDTPGHVDFTIEVERSMRVLDGAVMVYCAVGGVQPQSETVWRQANKYHVPRIAFVNKMDRMGANFLKVVNQIKTRLGANPVPLQLAIGAEEAFTGIVDLVKMKAINWNEADQGVTFTYEDIPADMVELANEWHQFLVESAAEASEELMDKYLGGETLSEEEIKNALRQRVLNNEIILVTCGSAFKNKGVQAMLDAVIEYLPSPTDVPAIKGILDDGKDTPAERHSDDNEPFAALAFKIATDPFVGNLTFFRVYSGVVNSGDTVLNSVKSARERFGRIVQMHANKREEIKEVRAGDIAAAIGLKDVTTGDTLCDQNAPIILERMEFPEPVISIAVEPKTKADQEKMGLALGRLAKEDPSFRVRTDEESNQTIISGMGELHLEIIVDRMKREFNVEANVGKPQVAYRETIRDTVKDVEGKHAKQSGGRGQYGHVVIDMFPLEPGGEGYTFTNDIKGGVIPGEYIPAVDKGIQEQLKSGPMAGYPVVDLGVRLHFGSYHDVDSSELAFKLAASLAFKEAFKRAKPVLLEPIMKVEVETPEDYMGDVIGDLNRRRGMIEGMEDTATGKTVRAQVPLSEMFGYATDLRSQTQGRASYSMEFLKYAEAPTNVAQAVIEARGK</sequence>
<protein>
    <recommendedName>
        <fullName evidence="1">Elongation factor G</fullName>
        <shortName evidence="1">EF-G</shortName>
    </recommendedName>
</protein>
<keyword id="KW-0963">Cytoplasm</keyword>
<keyword id="KW-0251">Elongation factor</keyword>
<keyword id="KW-0342">GTP-binding</keyword>
<keyword id="KW-0547">Nucleotide-binding</keyword>
<keyword id="KW-0648">Protein biosynthesis</keyword>
<reference key="1">
    <citation type="submission" date="2009-03" db="EMBL/GenBank/DDBJ databases">
        <title>Complete genome sequence of Edwardsiella ictaluri 93-146.</title>
        <authorList>
            <person name="Williams M.L."/>
            <person name="Gillaspy A.F."/>
            <person name="Dyer D.W."/>
            <person name="Thune R.L."/>
            <person name="Waldbieser G.C."/>
            <person name="Schuster S.C."/>
            <person name="Gipson J."/>
            <person name="Zaitshik J."/>
            <person name="Landry C."/>
            <person name="Lawrence M.L."/>
        </authorList>
    </citation>
    <scope>NUCLEOTIDE SEQUENCE [LARGE SCALE GENOMIC DNA]</scope>
    <source>
        <strain>93-146</strain>
    </source>
</reference>
<name>EFG_EDWI9</name>
<comment type="function">
    <text evidence="1">Catalyzes the GTP-dependent ribosomal translocation step during translation elongation. During this step, the ribosome changes from the pre-translocational (PRE) to the post-translocational (POST) state as the newly formed A-site-bound peptidyl-tRNA and P-site-bound deacylated tRNA move to the P and E sites, respectively. Catalyzes the coordinated movement of the two tRNA molecules, the mRNA and conformational changes in the ribosome.</text>
</comment>
<comment type="subcellular location">
    <subcellularLocation>
        <location evidence="1">Cytoplasm</location>
    </subcellularLocation>
</comment>
<comment type="similarity">
    <text evidence="1">Belongs to the TRAFAC class translation factor GTPase superfamily. Classic translation factor GTPase family. EF-G/EF-2 subfamily.</text>
</comment>
<accession>C5BGM8</accession>
<feature type="chain" id="PRO_1000202300" description="Elongation factor G">
    <location>
        <begin position="1"/>
        <end position="702"/>
    </location>
</feature>
<feature type="domain" description="tr-type G">
    <location>
        <begin position="8"/>
        <end position="290"/>
    </location>
</feature>
<feature type="binding site" evidence="1">
    <location>
        <begin position="17"/>
        <end position="24"/>
    </location>
    <ligand>
        <name>GTP</name>
        <dbReference type="ChEBI" id="CHEBI:37565"/>
    </ligand>
</feature>
<feature type="binding site" evidence="1">
    <location>
        <begin position="88"/>
        <end position="92"/>
    </location>
    <ligand>
        <name>GTP</name>
        <dbReference type="ChEBI" id="CHEBI:37565"/>
    </ligand>
</feature>
<feature type="binding site" evidence="1">
    <location>
        <begin position="142"/>
        <end position="145"/>
    </location>
    <ligand>
        <name>GTP</name>
        <dbReference type="ChEBI" id="CHEBI:37565"/>
    </ligand>
</feature>